<dbReference type="EC" id="3.2.2.23" evidence="2"/>
<dbReference type="EC" id="4.2.99.18" evidence="2"/>
<dbReference type="EMBL" id="CP000247">
    <property type="protein sequence ID" value="ABG71705.1"/>
    <property type="molecule type" value="Genomic_DNA"/>
</dbReference>
<dbReference type="RefSeq" id="WP_001114446.1">
    <property type="nucleotide sequence ID" value="NC_008253.1"/>
</dbReference>
<dbReference type="SMR" id="Q0TBH4"/>
<dbReference type="KEGG" id="ecp:ECP_3733"/>
<dbReference type="HOGENOM" id="CLU_038423_1_1_6"/>
<dbReference type="Proteomes" id="UP000009182">
    <property type="component" value="Chromosome"/>
</dbReference>
<dbReference type="GO" id="GO:0034039">
    <property type="term" value="F:8-oxo-7,8-dihydroguanine DNA N-glycosylase activity"/>
    <property type="evidence" value="ECO:0007669"/>
    <property type="project" value="TreeGrafter"/>
</dbReference>
<dbReference type="GO" id="GO:0140078">
    <property type="term" value="F:class I DNA-(apurinic or apyrimidinic site) endonuclease activity"/>
    <property type="evidence" value="ECO:0007669"/>
    <property type="project" value="UniProtKB-EC"/>
</dbReference>
<dbReference type="GO" id="GO:0003684">
    <property type="term" value="F:damaged DNA binding"/>
    <property type="evidence" value="ECO:0007669"/>
    <property type="project" value="InterPro"/>
</dbReference>
<dbReference type="GO" id="GO:0008270">
    <property type="term" value="F:zinc ion binding"/>
    <property type="evidence" value="ECO:0007669"/>
    <property type="project" value="UniProtKB-UniRule"/>
</dbReference>
<dbReference type="GO" id="GO:0006284">
    <property type="term" value="P:base-excision repair"/>
    <property type="evidence" value="ECO:0007669"/>
    <property type="project" value="InterPro"/>
</dbReference>
<dbReference type="CDD" id="cd08966">
    <property type="entry name" value="EcFpg-like_N"/>
    <property type="match status" value="1"/>
</dbReference>
<dbReference type="FunFam" id="1.10.8.50:FF:000003">
    <property type="entry name" value="Formamidopyrimidine-DNA glycosylase"/>
    <property type="match status" value="1"/>
</dbReference>
<dbReference type="FunFam" id="3.20.190.10:FF:000001">
    <property type="entry name" value="Formamidopyrimidine-DNA glycosylase"/>
    <property type="match status" value="1"/>
</dbReference>
<dbReference type="Gene3D" id="1.10.8.50">
    <property type="match status" value="1"/>
</dbReference>
<dbReference type="Gene3D" id="3.20.190.10">
    <property type="entry name" value="MutM-like, N-terminal"/>
    <property type="match status" value="1"/>
</dbReference>
<dbReference type="HAMAP" id="MF_00103">
    <property type="entry name" value="Fapy_DNA_glycosyl"/>
    <property type="match status" value="1"/>
</dbReference>
<dbReference type="InterPro" id="IPR015886">
    <property type="entry name" value="DNA_glyclase/AP_lyase_DNA-bd"/>
</dbReference>
<dbReference type="InterPro" id="IPR015887">
    <property type="entry name" value="DNA_glyclase_Znf_dom_DNA_BS"/>
</dbReference>
<dbReference type="InterPro" id="IPR020629">
    <property type="entry name" value="Formamido-pyr_DNA_Glyclase"/>
</dbReference>
<dbReference type="InterPro" id="IPR012319">
    <property type="entry name" value="FPG_cat"/>
</dbReference>
<dbReference type="InterPro" id="IPR035937">
    <property type="entry name" value="MutM-like_N-ter"/>
</dbReference>
<dbReference type="InterPro" id="IPR010979">
    <property type="entry name" value="Ribosomal_uS13-like_H2TH"/>
</dbReference>
<dbReference type="InterPro" id="IPR000214">
    <property type="entry name" value="Znf_DNA_glyclase/AP_lyase"/>
</dbReference>
<dbReference type="InterPro" id="IPR010663">
    <property type="entry name" value="Znf_FPG/IleRS"/>
</dbReference>
<dbReference type="NCBIfam" id="TIGR00577">
    <property type="entry name" value="fpg"/>
    <property type="match status" value="1"/>
</dbReference>
<dbReference type="NCBIfam" id="NF002211">
    <property type="entry name" value="PRK01103.1"/>
    <property type="match status" value="1"/>
</dbReference>
<dbReference type="PANTHER" id="PTHR22993">
    <property type="entry name" value="FORMAMIDOPYRIMIDINE-DNA GLYCOSYLASE"/>
    <property type="match status" value="1"/>
</dbReference>
<dbReference type="PANTHER" id="PTHR22993:SF9">
    <property type="entry name" value="FORMAMIDOPYRIMIDINE-DNA GLYCOSYLASE"/>
    <property type="match status" value="1"/>
</dbReference>
<dbReference type="Pfam" id="PF01149">
    <property type="entry name" value="Fapy_DNA_glyco"/>
    <property type="match status" value="1"/>
</dbReference>
<dbReference type="Pfam" id="PF06831">
    <property type="entry name" value="H2TH"/>
    <property type="match status" value="1"/>
</dbReference>
<dbReference type="Pfam" id="PF06827">
    <property type="entry name" value="zf-FPG_IleRS"/>
    <property type="match status" value="1"/>
</dbReference>
<dbReference type="SMART" id="SM00898">
    <property type="entry name" value="Fapy_DNA_glyco"/>
    <property type="match status" value="1"/>
</dbReference>
<dbReference type="SMART" id="SM01232">
    <property type="entry name" value="H2TH"/>
    <property type="match status" value="1"/>
</dbReference>
<dbReference type="SUPFAM" id="SSF57716">
    <property type="entry name" value="Glucocorticoid receptor-like (DNA-binding domain)"/>
    <property type="match status" value="1"/>
</dbReference>
<dbReference type="SUPFAM" id="SSF81624">
    <property type="entry name" value="N-terminal domain of MutM-like DNA repair proteins"/>
    <property type="match status" value="1"/>
</dbReference>
<dbReference type="SUPFAM" id="SSF46946">
    <property type="entry name" value="S13-like H2TH domain"/>
    <property type="match status" value="1"/>
</dbReference>
<dbReference type="PROSITE" id="PS51068">
    <property type="entry name" value="FPG_CAT"/>
    <property type="match status" value="1"/>
</dbReference>
<dbReference type="PROSITE" id="PS01242">
    <property type="entry name" value="ZF_FPG_1"/>
    <property type="match status" value="1"/>
</dbReference>
<dbReference type="PROSITE" id="PS51066">
    <property type="entry name" value="ZF_FPG_2"/>
    <property type="match status" value="1"/>
</dbReference>
<accession>Q0TBH4</accession>
<name>FPG_ECOL5</name>
<gene>
    <name evidence="2" type="primary">mutM</name>
    <name evidence="2" type="synonym">fpg</name>
    <name type="ordered locus">ECP_3733</name>
</gene>
<comment type="function">
    <text evidence="2">Involved in base excision repair of DNA damaged by oxidation or by mutagenic agents. Acts as a DNA glycosylase that recognizes and removes damaged bases. Has a preference for oxidized purines, such as 7,8-dihydro-8-oxoguanine (8-oxoG). Has AP (apurinic/apyrimidinic) lyase activity and introduces nicks in the DNA strand. Cleaves the DNA backbone by beta-delta elimination to generate a single-strand break at the site of the removed base with both 3'- and 5'-phosphates.</text>
</comment>
<comment type="catalytic activity">
    <reaction evidence="2">
        <text>Hydrolysis of DNA containing ring-opened 7-methylguanine residues, releasing 2,6-diamino-4-hydroxy-5-(N-methyl)formamidopyrimidine.</text>
        <dbReference type="EC" id="3.2.2.23"/>
    </reaction>
</comment>
<comment type="catalytic activity">
    <reaction evidence="2">
        <text>2'-deoxyribonucleotide-(2'-deoxyribose 5'-phosphate)-2'-deoxyribonucleotide-DNA = a 3'-end 2'-deoxyribonucleotide-(2,3-dehydro-2,3-deoxyribose 5'-phosphate)-DNA + a 5'-end 5'-phospho-2'-deoxyribonucleoside-DNA + H(+)</text>
        <dbReference type="Rhea" id="RHEA:66592"/>
        <dbReference type="Rhea" id="RHEA-COMP:13180"/>
        <dbReference type="Rhea" id="RHEA-COMP:16897"/>
        <dbReference type="Rhea" id="RHEA-COMP:17067"/>
        <dbReference type="ChEBI" id="CHEBI:15378"/>
        <dbReference type="ChEBI" id="CHEBI:136412"/>
        <dbReference type="ChEBI" id="CHEBI:157695"/>
        <dbReference type="ChEBI" id="CHEBI:167181"/>
        <dbReference type="EC" id="4.2.99.18"/>
    </reaction>
</comment>
<comment type="cofactor">
    <cofactor evidence="2">
        <name>Zn(2+)</name>
        <dbReference type="ChEBI" id="CHEBI:29105"/>
    </cofactor>
    <text evidence="2">Binds 1 zinc ion per subunit.</text>
</comment>
<comment type="subunit">
    <text evidence="2">Monomer.</text>
</comment>
<comment type="similarity">
    <text evidence="2">Belongs to the FPG family.</text>
</comment>
<proteinExistence type="inferred from homology"/>
<keyword id="KW-0227">DNA damage</keyword>
<keyword id="KW-0234">DNA repair</keyword>
<keyword id="KW-0238">DNA-binding</keyword>
<keyword id="KW-0326">Glycosidase</keyword>
<keyword id="KW-0378">Hydrolase</keyword>
<keyword id="KW-0456">Lyase</keyword>
<keyword id="KW-0479">Metal-binding</keyword>
<keyword id="KW-0511">Multifunctional enzyme</keyword>
<keyword id="KW-0862">Zinc</keyword>
<keyword id="KW-0863">Zinc-finger</keyword>
<sequence length="269" mass="30256">MPELPEVEAIRRGIEPHLVGATILHAVVRNGRLRWPVSEEIYRLSDQPVLSVQRRAKYLLLELPEGWIIIHLGMSGSLRILPEELPPEKHDHVDLVMSNGKVLRYTDPRRFGAWLWTKELEGHNVLAHLGPEPLSDDFNGEYLHQKCAKKKTAIKPWLMDNKLVVGVGNIYASESLFAAGIHPDRLASSLSLAECELLARVIKAVLLRSIEQGGTTLKDFLQSDGKPGYFAQELQVYGRKGEPCRVCGTPIVATKHAQRATFYCRQCQK</sequence>
<organism>
    <name type="scientific">Escherichia coli O6:K15:H31 (strain 536 / UPEC)</name>
    <dbReference type="NCBI Taxonomy" id="362663"/>
    <lineage>
        <taxon>Bacteria</taxon>
        <taxon>Pseudomonadati</taxon>
        <taxon>Pseudomonadota</taxon>
        <taxon>Gammaproteobacteria</taxon>
        <taxon>Enterobacterales</taxon>
        <taxon>Enterobacteriaceae</taxon>
        <taxon>Escherichia</taxon>
    </lineage>
</organism>
<reference key="1">
    <citation type="journal article" date="2006" name="Mol. Microbiol.">
        <title>Role of pathogenicity island-associated integrases in the genome plasticity of uropathogenic Escherichia coli strain 536.</title>
        <authorList>
            <person name="Hochhut B."/>
            <person name="Wilde C."/>
            <person name="Balling G."/>
            <person name="Middendorf B."/>
            <person name="Dobrindt U."/>
            <person name="Brzuszkiewicz E."/>
            <person name="Gottschalk G."/>
            <person name="Carniel E."/>
            <person name="Hacker J."/>
        </authorList>
    </citation>
    <scope>NUCLEOTIDE SEQUENCE [LARGE SCALE GENOMIC DNA]</scope>
    <source>
        <strain>536 / UPEC</strain>
    </source>
</reference>
<protein>
    <recommendedName>
        <fullName evidence="2">Formamidopyrimidine-DNA glycosylase</fullName>
        <shortName evidence="2">Fapy-DNA glycosylase</shortName>
        <ecNumber evidence="2">3.2.2.23</ecNumber>
    </recommendedName>
    <alternativeName>
        <fullName evidence="2">DNA-(apurinic or apyrimidinic site) lyase MutM</fullName>
        <shortName evidence="2">AP lyase MutM</shortName>
        <ecNumber evidence="2">4.2.99.18</ecNumber>
    </alternativeName>
</protein>
<evidence type="ECO:0000250" key="1"/>
<evidence type="ECO:0000255" key="2">
    <source>
        <dbReference type="HAMAP-Rule" id="MF_00103"/>
    </source>
</evidence>
<feature type="initiator methionine" description="Removed" evidence="1">
    <location>
        <position position="1"/>
    </location>
</feature>
<feature type="chain" id="PRO_1000008695" description="Formamidopyrimidine-DNA glycosylase">
    <location>
        <begin position="2"/>
        <end position="269"/>
    </location>
</feature>
<feature type="zinc finger region" description="FPG-type" evidence="2">
    <location>
        <begin position="235"/>
        <end position="269"/>
    </location>
</feature>
<feature type="active site" description="Schiff-base intermediate with DNA" evidence="2">
    <location>
        <position position="2"/>
    </location>
</feature>
<feature type="active site" description="Proton donor" evidence="2">
    <location>
        <position position="3"/>
    </location>
</feature>
<feature type="active site" description="Proton donor; for beta-elimination activity" evidence="2">
    <location>
        <position position="57"/>
    </location>
</feature>
<feature type="active site" description="Proton donor; for delta-elimination activity" evidence="2">
    <location>
        <position position="259"/>
    </location>
</feature>
<feature type="binding site" evidence="2">
    <location>
        <position position="90"/>
    </location>
    <ligand>
        <name>DNA</name>
        <dbReference type="ChEBI" id="CHEBI:16991"/>
    </ligand>
</feature>
<feature type="binding site" evidence="2">
    <location>
        <position position="109"/>
    </location>
    <ligand>
        <name>DNA</name>
        <dbReference type="ChEBI" id="CHEBI:16991"/>
    </ligand>
</feature>
<feature type="binding site" evidence="2">
    <location>
        <position position="150"/>
    </location>
    <ligand>
        <name>DNA</name>
        <dbReference type="ChEBI" id="CHEBI:16991"/>
    </ligand>
</feature>